<keyword id="KW-0325">Glycoprotein</keyword>
<keyword id="KW-0378">Hydrolase</keyword>
<keyword id="KW-1185">Reference proteome</keyword>
<keyword id="KW-0964">Secreted</keyword>
<keyword id="KW-0732">Signal</keyword>
<evidence type="ECO:0000255" key="1"/>
<evidence type="ECO:0000255" key="2">
    <source>
        <dbReference type="PROSITE-ProRule" id="PRU00498"/>
    </source>
</evidence>
<evidence type="ECO:0000269" key="3">
    <source>
    </source>
</evidence>
<evidence type="ECO:0000269" key="4">
    <source>
    </source>
</evidence>
<evidence type="ECO:0000303" key="5">
    <source>
    </source>
</evidence>
<evidence type="ECO:0000305" key="6"/>
<evidence type="ECO:0000312" key="7">
    <source>
        <dbReference type="Proteomes" id="UP000006706"/>
    </source>
</evidence>
<accession>A2QEQ6</accession>
<reference evidence="7" key="1">
    <citation type="journal article" date="2007" name="Nat. Biotechnol.">
        <title>Genome sequencing and analysis of the versatile cell factory Aspergillus niger CBS 513.88.</title>
        <authorList>
            <person name="Pel H.J."/>
            <person name="de Winde J.H."/>
            <person name="Archer D.B."/>
            <person name="Dyer P.S."/>
            <person name="Hofmann G."/>
            <person name="Schaap P.J."/>
            <person name="Turner G."/>
            <person name="de Vries R.P."/>
            <person name="Albang R."/>
            <person name="Albermann K."/>
            <person name="Andersen M.R."/>
            <person name="Bendtsen J.D."/>
            <person name="Benen J.A.E."/>
            <person name="van den Berg M."/>
            <person name="Breestraat S."/>
            <person name="Caddick M.X."/>
            <person name="Contreras R."/>
            <person name="Cornell M."/>
            <person name="Coutinho P.M."/>
            <person name="Danchin E.G.J."/>
            <person name="Debets A.J.M."/>
            <person name="Dekker P."/>
            <person name="van Dijck P.W.M."/>
            <person name="van Dijk A."/>
            <person name="Dijkhuizen L."/>
            <person name="Driessen A.J.M."/>
            <person name="d'Enfert C."/>
            <person name="Geysens S."/>
            <person name="Goosen C."/>
            <person name="Groot G.S.P."/>
            <person name="de Groot P.W.J."/>
            <person name="Guillemette T."/>
            <person name="Henrissat B."/>
            <person name="Herweijer M."/>
            <person name="van den Hombergh J.P.T.W."/>
            <person name="van den Hondel C.A.M.J.J."/>
            <person name="van der Heijden R.T.J.M."/>
            <person name="van der Kaaij R.M."/>
            <person name="Klis F.M."/>
            <person name="Kools H.J."/>
            <person name="Kubicek C.P."/>
            <person name="van Kuyk P.A."/>
            <person name="Lauber J."/>
            <person name="Lu X."/>
            <person name="van der Maarel M.J.E.C."/>
            <person name="Meulenberg R."/>
            <person name="Menke H."/>
            <person name="Mortimer M.A."/>
            <person name="Nielsen J."/>
            <person name="Oliver S.G."/>
            <person name="Olsthoorn M."/>
            <person name="Pal K."/>
            <person name="van Peij N.N.M.E."/>
            <person name="Ram A.F.J."/>
            <person name="Rinas U."/>
            <person name="Roubos J.A."/>
            <person name="Sagt C.M.J."/>
            <person name="Schmoll M."/>
            <person name="Sun J."/>
            <person name="Ussery D."/>
            <person name="Varga J."/>
            <person name="Vervecken W."/>
            <person name="van de Vondervoort P.J.J."/>
            <person name="Wedler H."/>
            <person name="Woesten H.A.B."/>
            <person name="Zeng A.-P."/>
            <person name="van Ooyen A.J.J."/>
            <person name="Visser J."/>
            <person name="Stam H."/>
        </authorList>
    </citation>
    <scope>NUCLEOTIDE SEQUENCE [LARGE SCALE GENOMIC DNA]</scope>
    <source>
        <strain>ATCC MYA-4892 / CBS 513.88 / FGSC A1513</strain>
    </source>
</reference>
<reference key="2">
    <citation type="journal article" date="2008" name="Carbohydr. Res.">
        <title>Properties of family 79 beta-glucuronidases that hydrolyze beta-glucuronosyl and 4-O-methyl-beta-glucuronosyl residues of arabinogalactan-protein.</title>
        <authorList>
            <person name="Konishi T."/>
            <person name="Kotake T."/>
            <person name="Soraya D."/>
            <person name="Matsuoka K."/>
            <person name="Koyama T."/>
            <person name="Kaneko S."/>
            <person name="Igarashi K."/>
            <person name="Samejima M."/>
            <person name="Tsumuraya Y."/>
        </authorList>
    </citation>
    <scope>FUNCTION</scope>
    <scope>CATALYTIC ACTIVITY</scope>
    <scope>BIOPHYSICOCHEMICAL PROPERTIES</scope>
    <scope>GLYCOSYLATION</scope>
</reference>
<reference key="3">
    <citation type="journal article" date="2012" name="J. Proteome Res.">
        <title>Spatially resolving the secretome within the mycelium of the cell factory Aspergillus niger.</title>
        <authorList>
            <person name="Krijgsheld P."/>
            <person name="Altelaar A.F."/>
            <person name="Post H."/>
            <person name="Ringrose J.H."/>
            <person name="Mueller W.H."/>
            <person name="Heck A.J."/>
            <person name="Woesten H.A."/>
        </authorList>
    </citation>
    <scope>IDENTIFICATION BY MASS SPECTROMETRY</scope>
    <scope>SUBCELLULAR LOCATION</scope>
</reference>
<protein>
    <recommendedName>
        <fullName evidence="5">Beta-glucuronidase</fullName>
        <shortName evidence="5">GlcAase</shortName>
        <ecNumber evidence="3">3.2.1.31</ecNumber>
    </recommendedName>
    <alternativeName>
        <fullName evidence="6">Beta-D-glucuronoside glucuronosohydrolase</fullName>
    </alternativeName>
</protein>
<feature type="signal peptide" evidence="1">
    <location>
        <begin position="1"/>
        <end position="20"/>
    </location>
</feature>
<feature type="chain" id="PRO_5000219654" description="Beta-glucuronidase" evidence="1">
    <location>
        <begin position="21"/>
        <end position="541"/>
    </location>
</feature>
<feature type="active site" description="Proton donor" evidence="1">
    <location>
        <position position="208"/>
    </location>
</feature>
<feature type="active site" description="Nucleophile" evidence="1">
    <location>
        <position position="324"/>
    </location>
</feature>
<feature type="glycosylation site" description="N-linked (GlcNAc...) asparagine" evidence="2">
    <location>
        <position position="69"/>
    </location>
</feature>
<feature type="glycosylation site" description="N-linked (GlcNAc...) asparagine" evidence="2">
    <location>
        <position position="115"/>
    </location>
</feature>
<feature type="glycosylation site" description="N-linked (GlcNAc...) asparagine" evidence="2">
    <location>
        <position position="157"/>
    </location>
</feature>
<feature type="glycosylation site" description="N-linked (GlcNAc...) asparagine" evidence="2">
    <location>
        <position position="217"/>
    </location>
</feature>
<feature type="glycosylation site" description="N-linked (GlcNAc...) asparagine" evidence="2">
    <location>
        <position position="291"/>
    </location>
</feature>
<feature type="glycosylation site" description="N-linked (GlcNAc...) asparagine" evidence="2">
    <location>
        <position position="304"/>
    </location>
</feature>
<feature type="glycosylation site" description="N-linked (GlcNAc...) asparagine" evidence="2">
    <location>
        <position position="380"/>
    </location>
</feature>
<feature type="glycosylation site" description="N-linked (GlcNAc...) asparagine" evidence="2">
    <location>
        <position position="426"/>
    </location>
</feature>
<feature type="glycosylation site" description="N-linked (GlcNAc...) asparagine" evidence="2">
    <location>
        <position position="441"/>
    </location>
</feature>
<feature type="glycosylation site" description="N-linked (GlcNAc...) asparagine" evidence="2">
    <location>
        <position position="483"/>
    </location>
</feature>
<feature type="glycosylation site" description="N-linked (GlcNAc...) asparagine" evidence="2">
    <location>
        <position position="512"/>
    </location>
</feature>
<dbReference type="EC" id="3.2.1.31" evidence="3"/>
<dbReference type="EMBL" id="AM270032">
    <property type="protein sequence ID" value="CAK96418.1"/>
    <property type="molecule type" value="Genomic_DNA"/>
</dbReference>
<dbReference type="RefSeq" id="XP_001400317.1">
    <property type="nucleotide sequence ID" value="XM_001400280.1"/>
</dbReference>
<dbReference type="SMR" id="A2QEQ6"/>
<dbReference type="CAZy" id="GH79">
    <property type="family name" value="Glycoside Hydrolase Family 79"/>
</dbReference>
<dbReference type="EnsemblFungi" id="CAK96418">
    <property type="protein sequence ID" value="CAK96418"/>
    <property type="gene ID" value="An02g11890"/>
</dbReference>
<dbReference type="GeneID" id="4979726"/>
<dbReference type="KEGG" id="ang:An02g11890"/>
<dbReference type="VEuPathDB" id="FungiDB:An02g11890"/>
<dbReference type="HOGENOM" id="CLU_022148_0_0_1"/>
<dbReference type="BioCyc" id="MetaCyc:MONOMER-20549"/>
<dbReference type="Proteomes" id="UP000006706">
    <property type="component" value="Chromosome 4R"/>
</dbReference>
<dbReference type="GO" id="GO:0005576">
    <property type="term" value="C:extracellular region"/>
    <property type="evidence" value="ECO:0007669"/>
    <property type="project" value="UniProtKB-SubCell"/>
</dbReference>
<dbReference type="GO" id="GO:0004566">
    <property type="term" value="F:beta-glucuronidase activity"/>
    <property type="evidence" value="ECO:0007669"/>
    <property type="project" value="UniProtKB-EC"/>
</dbReference>
<dbReference type="Gene3D" id="3.20.20.80">
    <property type="entry name" value="Glycosidases"/>
    <property type="match status" value="1"/>
</dbReference>
<dbReference type="InterPro" id="IPR052974">
    <property type="entry name" value="GH79_Enzymes"/>
</dbReference>
<dbReference type="InterPro" id="IPR031728">
    <property type="entry name" value="GlcAase_C"/>
</dbReference>
<dbReference type="InterPro" id="IPR017853">
    <property type="entry name" value="Glycoside_hydrolase_SF"/>
</dbReference>
<dbReference type="PANTHER" id="PTHR36183">
    <property type="entry name" value="BETA-GLUCURONIDASE"/>
    <property type="match status" value="1"/>
</dbReference>
<dbReference type="PANTHER" id="PTHR36183:SF2">
    <property type="entry name" value="BETA-GLUCURONIDASE C-TERMINAL DOMAIN-CONTAINING PROTEIN"/>
    <property type="match status" value="1"/>
</dbReference>
<dbReference type="Pfam" id="PF16862">
    <property type="entry name" value="Glyco_hydro_79C"/>
    <property type="match status" value="1"/>
</dbReference>
<dbReference type="SUPFAM" id="SSF51445">
    <property type="entry name" value="(Trans)glycosidases"/>
    <property type="match status" value="1"/>
</dbReference>
<organism evidence="7">
    <name type="scientific">Aspergillus niger (strain ATCC MYA-4892 / CBS 513.88 / FGSC A1513)</name>
    <dbReference type="NCBI Taxonomy" id="425011"/>
    <lineage>
        <taxon>Eukaryota</taxon>
        <taxon>Fungi</taxon>
        <taxon>Dikarya</taxon>
        <taxon>Ascomycota</taxon>
        <taxon>Pezizomycotina</taxon>
        <taxon>Eurotiomycetes</taxon>
        <taxon>Eurotiomycetidae</taxon>
        <taxon>Eurotiales</taxon>
        <taxon>Aspergillaceae</taxon>
        <taxon>Aspergillus</taxon>
        <taxon>Aspergillus subgen. Circumdati</taxon>
    </lineage>
</organism>
<comment type="function">
    <text evidence="3">Beta-glucuronidase that hydrolyzes beta-glucuronosyl and 4-O-methyl-beta-glucuronosyl residues of arabinogalactan-protein. Hydrolyzed heparan sulfate only very weakly. Has no activity on xylan from birchwood. Able to catalyze the transglycosylation of glucuronic acid (GlcA) residues from p-nitrophenyl-beta-glucuronic acid (PNP beta-GlcA) to various monosaccharide acceptors such as glucose, galactose and xylose.</text>
</comment>
<comment type="catalytic activity">
    <reaction>
        <text>a beta-D-glucuronoside + H2O = D-glucuronate + an alcohol</text>
        <dbReference type="Rhea" id="RHEA:17633"/>
        <dbReference type="ChEBI" id="CHEBI:15377"/>
        <dbReference type="ChEBI" id="CHEBI:30879"/>
        <dbReference type="ChEBI" id="CHEBI:58720"/>
        <dbReference type="ChEBI" id="CHEBI:83411"/>
        <dbReference type="EC" id="3.2.1.31"/>
    </reaction>
</comment>
<comment type="biophysicochemical properties">
    <kinetics>
        <KM evidence="3">30.4 uM for p-nitrophenyl-beta-glucuronic acid (when expressed in P.pastoris)</KM>
        <KM evidence="3">422 uM for p-nitrophenyl-beta-galacturonic acid (when expressed in P.pastoris)</KM>
    </kinetics>
    <phDependence>
        <text evidence="3">Optimum pH is 3.0-4.0.</text>
    </phDependence>
    <temperatureDependence>
        <text evidence="3">Optimum temperature is 45 degrees Celsius.</text>
    </temperatureDependence>
</comment>
<comment type="subcellular location">
    <subcellularLocation>
        <location evidence="4">Secreted</location>
    </subcellularLocation>
</comment>
<comment type="PTM">
    <text evidence="3">N-glycosylated.</text>
</comment>
<comment type="similarity">
    <text evidence="6">Belongs to the glycosyl hydrolase 79 family.</text>
</comment>
<gene>
    <name type="ORF">An02g11890</name>
</gene>
<sequence>MHHHPITLLSLLLGAAQSIAAHPTAHDERRSSSSIGVSASVPDDAALPVLHPFVSFSIEFAFFPDFAGNLSHPNLFSNQLLDNLADLQGAKPYIRVGGNTQDFALYDPKLRAATNATYITSISTDYPLILSFGPAFFESYFTWPGTKFIHGFNLGKNSSSDIELMLESVPLACKALEGGKLAYWELGNEPDLYKTSAQGIRRPASWTEQDYVDEWLNKTARIEKRLVEACPELAESKYIAPSFAGVTNSLNPVVTWEKGLDKSRNIALNSEHNYIGGATQPGVTLQNTLMNHTKTVESVAQQVNVSRILSKDNLTPGIPYILGETNSLYNEGAPGLSNSFGAALWGVDFNLYCASQNIRRTHMHQGSNYNYISWQPVGTNRTTIGTKAPYYGNAMVAAMLHGGDDVRIVNLPLAADTEAAYAAYVNETLVRVAVINLVEFNYTSTDSTAEKVESRPSAKYTFQLPSSESVYAGSVSVQRLMANGSNAITGITWDGWSYNYELAQGKPVRLQNVTTGEAISVGDDGVVEIEIPYSSAAILSL</sequence>
<proteinExistence type="evidence at protein level"/>
<name>GUS79_ASPNC</name>